<name>RL4_ECO5E</name>
<feature type="chain" id="PRO_1000142118" description="Large ribosomal subunit protein uL4">
    <location>
        <begin position="1"/>
        <end position="201"/>
    </location>
</feature>
<feature type="region of interest" description="Disordered" evidence="2">
    <location>
        <begin position="44"/>
        <end position="71"/>
    </location>
</feature>
<reference key="1">
    <citation type="journal article" date="2011" name="Proc. Natl. Acad. Sci. U.S.A.">
        <title>Genomic anatomy of Escherichia coli O157:H7 outbreaks.</title>
        <authorList>
            <person name="Eppinger M."/>
            <person name="Mammel M.K."/>
            <person name="Leclerc J.E."/>
            <person name="Ravel J."/>
            <person name="Cebula T.A."/>
        </authorList>
    </citation>
    <scope>NUCLEOTIDE SEQUENCE [LARGE SCALE GENOMIC DNA]</scope>
    <source>
        <strain>EC4115 / EHEC</strain>
    </source>
</reference>
<proteinExistence type="inferred from homology"/>
<keyword id="KW-0687">Ribonucleoprotein</keyword>
<keyword id="KW-0689">Ribosomal protein</keyword>
<keyword id="KW-0694">RNA-binding</keyword>
<keyword id="KW-0699">rRNA-binding</keyword>
<organism>
    <name type="scientific">Escherichia coli O157:H7 (strain EC4115 / EHEC)</name>
    <dbReference type="NCBI Taxonomy" id="444450"/>
    <lineage>
        <taxon>Bacteria</taxon>
        <taxon>Pseudomonadati</taxon>
        <taxon>Pseudomonadota</taxon>
        <taxon>Gammaproteobacteria</taxon>
        <taxon>Enterobacterales</taxon>
        <taxon>Enterobacteriaceae</taxon>
        <taxon>Escherichia</taxon>
    </lineage>
</organism>
<accession>B5YTP0</accession>
<sequence length="201" mass="22087">MELVLKDAQSALTVSETTFGRDFNEALVHQVVVAYAAGARQGTRAQKTRAEVTGSGKKPWRQKGTGRARSGSIKSPIWRSGGVTFAARPQDHSQKVNKKMYRGALKSILSELVRQDRLIVVEKFSVEAPKTKLLAQKLKDMALEDVLIITGELDENLFLAARNLHKVDVRDATGIDPVSLIAFDKVVMTADAVKQVEEMLA</sequence>
<gene>
    <name evidence="1" type="primary">rplD</name>
    <name type="ordered locus">ECH74115_4642</name>
</gene>
<dbReference type="EMBL" id="CP001164">
    <property type="protein sequence ID" value="ACI37384.1"/>
    <property type="molecule type" value="Genomic_DNA"/>
</dbReference>
<dbReference type="RefSeq" id="WP_000424395.1">
    <property type="nucleotide sequence ID" value="NC_011353.1"/>
</dbReference>
<dbReference type="SMR" id="B5YTP0"/>
<dbReference type="GeneID" id="97442859"/>
<dbReference type="KEGG" id="ecf:ECH74115_4642"/>
<dbReference type="HOGENOM" id="CLU_041575_5_2_6"/>
<dbReference type="GO" id="GO:1990904">
    <property type="term" value="C:ribonucleoprotein complex"/>
    <property type="evidence" value="ECO:0007669"/>
    <property type="project" value="UniProtKB-KW"/>
</dbReference>
<dbReference type="GO" id="GO:0005840">
    <property type="term" value="C:ribosome"/>
    <property type="evidence" value="ECO:0007669"/>
    <property type="project" value="UniProtKB-KW"/>
</dbReference>
<dbReference type="GO" id="GO:0019843">
    <property type="term" value="F:rRNA binding"/>
    <property type="evidence" value="ECO:0007669"/>
    <property type="project" value="UniProtKB-UniRule"/>
</dbReference>
<dbReference type="GO" id="GO:0003735">
    <property type="term" value="F:structural constituent of ribosome"/>
    <property type="evidence" value="ECO:0007669"/>
    <property type="project" value="InterPro"/>
</dbReference>
<dbReference type="GO" id="GO:0006412">
    <property type="term" value="P:translation"/>
    <property type="evidence" value="ECO:0007669"/>
    <property type="project" value="UniProtKB-UniRule"/>
</dbReference>
<dbReference type="FunFam" id="3.40.1370.10:FF:000001">
    <property type="entry name" value="50S ribosomal protein L4"/>
    <property type="match status" value="1"/>
</dbReference>
<dbReference type="Gene3D" id="3.40.1370.10">
    <property type="match status" value="1"/>
</dbReference>
<dbReference type="HAMAP" id="MF_01328_B">
    <property type="entry name" value="Ribosomal_uL4_B"/>
    <property type="match status" value="1"/>
</dbReference>
<dbReference type="InterPro" id="IPR002136">
    <property type="entry name" value="Ribosomal_uL4"/>
</dbReference>
<dbReference type="InterPro" id="IPR013005">
    <property type="entry name" value="Ribosomal_uL4-like"/>
</dbReference>
<dbReference type="InterPro" id="IPR023574">
    <property type="entry name" value="Ribosomal_uL4_dom_sf"/>
</dbReference>
<dbReference type="NCBIfam" id="TIGR03953">
    <property type="entry name" value="rplD_bact"/>
    <property type="match status" value="1"/>
</dbReference>
<dbReference type="PANTHER" id="PTHR10746">
    <property type="entry name" value="50S RIBOSOMAL PROTEIN L4"/>
    <property type="match status" value="1"/>
</dbReference>
<dbReference type="PANTHER" id="PTHR10746:SF6">
    <property type="entry name" value="LARGE RIBOSOMAL SUBUNIT PROTEIN UL4M"/>
    <property type="match status" value="1"/>
</dbReference>
<dbReference type="Pfam" id="PF00573">
    <property type="entry name" value="Ribosomal_L4"/>
    <property type="match status" value="1"/>
</dbReference>
<dbReference type="SUPFAM" id="SSF52166">
    <property type="entry name" value="Ribosomal protein L4"/>
    <property type="match status" value="1"/>
</dbReference>
<comment type="function">
    <text evidence="1">One of the primary rRNA binding proteins, this protein initially binds near the 5'-end of the 23S rRNA. It is important during the early stages of 50S assembly. It makes multiple contacts with different domains of the 23S rRNA in the assembled 50S subunit and ribosome.</text>
</comment>
<comment type="function">
    <text evidence="1">Forms part of the polypeptide exit tunnel.</text>
</comment>
<comment type="subunit">
    <text evidence="1">Part of the 50S ribosomal subunit.</text>
</comment>
<comment type="similarity">
    <text evidence="1">Belongs to the universal ribosomal protein uL4 family.</text>
</comment>
<evidence type="ECO:0000255" key="1">
    <source>
        <dbReference type="HAMAP-Rule" id="MF_01328"/>
    </source>
</evidence>
<evidence type="ECO:0000256" key="2">
    <source>
        <dbReference type="SAM" id="MobiDB-lite"/>
    </source>
</evidence>
<evidence type="ECO:0000305" key="3"/>
<protein>
    <recommendedName>
        <fullName evidence="1">Large ribosomal subunit protein uL4</fullName>
    </recommendedName>
    <alternativeName>
        <fullName evidence="3">50S ribosomal protein L4</fullName>
    </alternativeName>
</protein>